<evidence type="ECO:0000255" key="1">
    <source>
        <dbReference type="HAMAP-Rule" id="MF_01715"/>
    </source>
</evidence>
<feature type="chain" id="PRO_0000092992" description="Teichoic acids export ATP-binding protein TagH">
    <location>
        <begin position="1"/>
        <end position="335"/>
    </location>
</feature>
<feature type="domain" description="ABC transporter" evidence="1">
    <location>
        <begin position="26"/>
        <end position="246"/>
    </location>
</feature>
<feature type="binding site" evidence="1">
    <location>
        <begin position="60"/>
        <end position="67"/>
    </location>
    <ligand>
        <name>ATP</name>
        <dbReference type="ChEBI" id="CHEBI:30616"/>
    </ligand>
</feature>
<keyword id="KW-0067">ATP-binding</keyword>
<keyword id="KW-1003">Cell membrane</keyword>
<keyword id="KW-0472">Membrane</keyword>
<keyword id="KW-0547">Nucleotide-binding</keyword>
<keyword id="KW-1278">Translocase</keyword>
<keyword id="KW-0813">Transport</keyword>
<accession>Q92CV8</accession>
<gene>
    <name evidence="1" type="primary">tagH</name>
    <name type="ordered locus">lin1063</name>
</gene>
<organism>
    <name type="scientific">Listeria innocua serovar 6a (strain ATCC BAA-680 / CLIP 11262)</name>
    <dbReference type="NCBI Taxonomy" id="272626"/>
    <lineage>
        <taxon>Bacteria</taxon>
        <taxon>Bacillati</taxon>
        <taxon>Bacillota</taxon>
        <taxon>Bacilli</taxon>
        <taxon>Bacillales</taxon>
        <taxon>Listeriaceae</taxon>
        <taxon>Listeria</taxon>
    </lineage>
</organism>
<sequence length="335" mass="37769">MGKNIKIAFKHVSKEYDLYQNKSDKIKGLFMPKSQKMQSFWALRDVSFDIHDGETVGLIGINGSGKSTISSIMSGVIPPTQGEVVINGETSLIAIAVGLKGPLTGYENIRLKLLMHGMKSSQINKLMPSIIEFADIGDFINQPIKNYSSGMRSRLGFAISVHTNPDILVIDEALSVGDQTFYEKCVNKINEFKARGKTIVFVSHSLGQVKSLCDRIIWMHHGEIREMGEAKEVAQKYDEFVKWFNKQPNDYKKKYQKEHKEHQKAPQKKVYPNPNANKYRLTLFDKFLLTALIVLTILFGTLVATGKSFKGLISETSTNQVEQIAYVDNNEITIR</sequence>
<protein>
    <recommendedName>
        <fullName evidence="1">Teichoic acids export ATP-binding protein TagH</fullName>
        <ecNumber evidence="1">7.5.2.4</ecNumber>
    </recommendedName>
</protein>
<reference key="1">
    <citation type="journal article" date="2001" name="Science">
        <title>Comparative genomics of Listeria species.</title>
        <authorList>
            <person name="Glaser P."/>
            <person name="Frangeul L."/>
            <person name="Buchrieser C."/>
            <person name="Rusniok C."/>
            <person name="Amend A."/>
            <person name="Baquero F."/>
            <person name="Berche P."/>
            <person name="Bloecker H."/>
            <person name="Brandt P."/>
            <person name="Chakraborty T."/>
            <person name="Charbit A."/>
            <person name="Chetouani F."/>
            <person name="Couve E."/>
            <person name="de Daruvar A."/>
            <person name="Dehoux P."/>
            <person name="Domann E."/>
            <person name="Dominguez-Bernal G."/>
            <person name="Duchaud E."/>
            <person name="Durant L."/>
            <person name="Dussurget O."/>
            <person name="Entian K.-D."/>
            <person name="Fsihi H."/>
            <person name="Garcia-del Portillo F."/>
            <person name="Garrido P."/>
            <person name="Gautier L."/>
            <person name="Goebel W."/>
            <person name="Gomez-Lopez N."/>
            <person name="Hain T."/>
            <person name="Hauf J."/>
            <person name="Jackson D."/>
            <person name="Jones L.-M."/>
            <person name="Kaerst U."/>
            <person name="Kreft J."/>
            <person name="Kuhn M."/>
            <person name="Kunst F."/>
            <person name="Kurapkat G."/>
            <person name="Madueno E."/>
            <person name="Maitournam A."/>
            <person name="Mata Vicente J."/>
            <person name="Ng E."/>
            <person name="Nedjari H."/>
            <person name="Nordsiek G."/>
            <person name="Novella S."/>
            <person name="de Pablos B."/>
            <person name="Perez-Diaz J.-C."/>
            <person name="Purcell R."/>
            <person name="Remmel B."/>
            <person name="Rose M."/>
            <person name="Schlueter T."/>
            <person name="Simoes N."/>
            <person name="Tierrez A."/>
            <person name="Vazquez-Boland J.-A."/>
            <person name="Voss H."/>
            <person name="Wehland J."/>
            <person name="Cossart P."/>
        </authorList>
    </citation>
    <scope>NUCLEOTIDE SEQUENCE [LARGE SCALE GENOMIC DNA]</scope>
    <source>
        <strain>ATCC BAA-680 / CLIP 11262</strain>
    </source>
</reference>
<proteinExistence type="inferred from homology"/>
<dbReference type="EC" id="7.5.2.4" evidence="1"/>
<dbReference type="EMBL" id="AL596167">
    <property type="protein sequence ID" value="CAC96294.1"/>
    <property type="molecule type" value="Genomic_DNA"/>
</dbReference>
<dbReference type="PIR" id="AF1565">
    <property type="entry name" value="AF1565"/>
</dbReference>
<dbReference type="RefSeq" id="WP_010990735.1">
    <property type="nucleotide sequence ID" value="NC_003212.1"/>
</dbReference>
<dbReference type="SMR" id="Q92CV8"/>
<dbReference type="STRING" id="272626.gene:17565393"/>
<dbReference type="GeneID" id="93234511"/>
<dbReference type="KEGG" id="lin:lin1063"/>
<dbReference type="eggNOG" id="COG1134">
    <property type="taxonomic scope" value="Bacteria"/>
</dbReference>
<dbReference type="HOGENOM" id="CLU_000604_1_2_9"/>
<dbReference type="OrthoDB" id="9778870at2"/>
<dbReference type="Proteomes" id="UP000002513">
    <property type="component" value="Chromosome"/>
</dbReference>
<dbReference type="GO" id="GO:0005886">
    <property type="term" value="C:plasma membrane"/>
    <property type="evidence" value="ECO:0007669"/>
    <property type="project" value="UniProtKB-SubCell"/>
</dbReference>
<dbReference type="GO" id="GO:0015438">
    <property type="term" value="F:ABC-type teichoic acid transporter activity"/>
    <property type="evidence" value="ECO:0007669"/>
    <property type="project" value="UniProtKB-EC"/>
</dbReference>
<dbReference type="GO" id="GO:0005524">
    <property type="term" value="F:ATP binding"/>
    <property type="evidence" value="ECO:0007669"/>
    <property type="project" value="UniProtKB-KW"/>
</dbReference>
<dbReference type="GO" id="GO:0016887">
    <property type="term" value="F:ATP hydrolysis activity"/>
    <property type="evidence" value="ECO:0007669"/>
    <property type="project" value="InterPro"/>
</dbReference>
<dbReference type="CDD" id="cd03220">
    <property type="entry name" value="ABC_KpsT_Wzt"/>
    <property type="match status" value="1"/>
</dbReference>
<dbReference type="FunFam" id="3.40.50.300:FF:003010">
    <property type="entry name" value="Teichoic acids export ATP-binding protein TagH"/>
    <property type="match status" value="1"/>
</dbReference>
<dbReference type="Gene3D" id="3.40.50.300">
    <property type="entry name" value="P-loop containing nucleotide triphosphate hydrolases"/>
    <property type="match status" value="1"/>
</dbReference>
<dbReference type="InterPro" id="IPR003593">
    <property type="entry name" value="AAA+_ATPase"/>
</dbReference>
<dbReference type="InterPro" id="IPR003439">
    <property type="entry name" value="ABC_transporter-like_ATP-bd"/>
</dbReference>
<dbReference type="InterPro" id="IPR017871">
    <property type="entry name" value="ABC_transporter-like_CS"/>
</dbReference>
<dbReference type="InterPro" id="IPR015860">
    <property type="entry name" value="ABC_transpr_TagH-like"/>
</dbReference>
<dbReference type="InterPro" id="IPR050683">
    <property type="entry name" value="Bact_Polysacc_Export_ATP-bd"/>
</dbReference>
<dbReference type="InterPro" id="IPR027417">
    <property type="entry name" value="P-loop_NTPase"/>
</dbReference>
<dbReference type="NCBIfam" id="NF010066">
    <property type="entry name" value="PRK13546.1"/>
    <property type="match status" value="1"/>
</dbReference>
<dbReference type="PANTHER" id="PTHR46743">
    <property type="entry name" value="TEICHOIC ACIDS EXPORT ATP-BINDING PROTEIN TAGH"/>
    <property type="match status" value="1"/>
</dbReference>
<dbReference type="PANTHER" id="PTHR46743:SF2">
    <property type="entry name" value="TEICHOIC ACIDS EXPORT ATP-BINDING PROTEIN TAGH"/>
    <property type="match status" value="1"/>
</dbReference>
<dbReference type="Pfam" id="PF00005">
    <property type="entry name" value="ABC_tran"/>
    <property type="match status" value="1"/>
</dbReference>
<dbReference type="SMART" id="SM00382">
    <property type="entry name" value="AAA"/>
    <property type="match status" value="1"/>
</dbReference>
<dbReference type="SUPFAM" id="SSF52540">
    <property type="entry name" value="P-loop containing nucleoside triphosphate hydrolases"/>
    <property type="match status" value="1"/>
</dbReference>
<dbReference type="PROSITE" id="PS00211">
    <property type="entry name" value="ABC_TRANSPORTER_1"/>
    <property type="match status" value="1"/>
</dbReference>
<dbReference type="PROSITE" id="PS50893">
    <property type="entry name" value="ABC_TRANSPORTER_2"/>
    <property type="match status" value="1"/>
</dbReference>
<dbReference type="PROSITE" id="PS51251">
    <property type="entry name" value="TAGH"/>
    <property type="match status" value="1"/>
</dbReference>
<comment type="function">
    <text evidence="1">Part of the ABC transporter complex TagGH involved in teichoic acids export. Responsible for energy coupling to the transport system.</text>
</comment>
<comment type="catalytic activity">
    <reaction evidence="1">
        <text>ATP + H2O + teichoic acidSide 1 = ADP + phosphate + teichoic acidSide 2.</text>
        <dbReference type="EC" id="7.5.2.4"/>
    </reaction>
</comment>
<comment type="subunit">
    <text evidence="1">The complex is composed of two ATP-binding proteins (TagH) and two transmembrane proteins (TagG).</text>
</comment>
<comment type="subcellular location">
    <subcellularLocation>
        <location evidence="1">Cell membrane</location>
        <topology evidence="1">Peripheral membrane protein</topology>
    </subcellularLocation>
</comment>
<comment type="similarity">
    <text evidence="1">Belongs to the ABC transporter superfamily. Teichoic acids exporter (TC 3.A.1.104.1) family.</text>
</comment>
<name>TAGH_LISIN</name>